<dbReference type="EC" id="4.1.1.105" evidence="2"/>
<dbReference type="EMBL" id="U73657">
    <property type="protein sequence ID" value="AAB39709.1"/>
    <property type="molecule type" value="Genomic_DNA"/>
</dbReference>
<dbReference type="SMR" id="P93083"/>
<dbReference type="KEGG" id="ag:AAB39709"/>
<dbReference type="BioCyc" id="MetaCyc:MONOMER-15094"/>
<dbReference type="BRENDA" id="4.1.1.105">
    <property type="organism ID" value="7029"/>
</dbReference>
<dbReference type="GO" id="GO:0005737">
    <property type="term" value="C:cytoplasm"/>
    <property type="evidence" value="ECO:0007669"/>
    <property type="project" value="TreeGrafter"/>
</dbReference>
<dbReference type="GO" id="GO:0036469">
    <property type="term" value="F:L-tryptophan decarboxylase activity"/>
    <property type="evidence" value="ECO:0000314"/>
    <property type="project" value="UniProtKB"/>
</dbReference>
<dbReference type="GO" id="GO:0030170">
    <property type="term" value="F:pyridoxal phosphate binding"/>
    <property type="evidence" value="ECO:0007669"/>
    <property type="project" value="InterPro"/>
</dbReference>
<dbReference type="GO" id="GO:0006520">
    <property type="term" value="P:amino acid metabolic process"/>
    <property type="evidence" value="ECO:0007669"/>
    <property type="project" value="InterPro"/>
</dbReference>
<dbReference type="GO" id="GO:0019752">
    <property type="term" value="P:carboxylic acid metabolic process"/>
    <property type="evidence" value="ECO:0007669"/>
    <property type="project" value="InterPro"/>
</dbReference>
<dbReference type="GO" id="GO:0035835">
    <property type="term" value="P:indole alkaloid biosynthetic process"/>
    <property type="evidence" value="ECO:0000314"/>
    <property type="project" value="UniProtKB"/>
</dbReference>
<dbReference type="CDD" id="cd06450">
    <property type="entry name" value="DOPA_deC_like"/>
    <property type="match status" value="1"/>
</dbReference>
<dbReference type="FunFam" id="1.20.1340.10:FF:000001">
    <property type="entry name" value="Histidine decarboxylase"/>
    <property type="match status" value="1"/>
</dbReference>
<dbReference type="FunFam" id="3.40.640.10:FF:000025">
    <property type="entry name" value="Histidine decarboxylase"/>
    <property type="match status" value="1"/>
</dbReference>
<dbReference type="Gene3D" id="3.90.1150.10">
    <property type="entry name" value="Aspartate Aminotransferase, domain 1"/>
    <property type="match status" value="1"/>
</dbReference>
<dbReference type="Gene3D" id="1.20.1340.10">
    <property type="entry name" value="dopa decarboxylase, N-terminal domain"/>
    <property type="match status" value="1"/>
</dbReference>
<dbReference type="Gene3D" id="3.40.640.10">
    <property type="entry name" value="Type I PLP-dependent aspartate aminotransferase-like (Major domain)"/>
    <property type="match status" value="1"/>
</dbReference>
<dbReference type="InterPro" id="IPR010977">
    <property type="entry name" value="Aromatic_deC"/>
</dbReference>
<dbReference type="InterPro" id="IPR002129">
    <property type="entry name" value="PyrdxlP-dep_de-COase"/>
</dbReference>
<dbReference type="InterPro" id="IPR015424">
    <property type="entry name" value="PyrdxlP-dep_Trfase"/>
</dbReference>
<dbReference type="InterPro" id="IPR015421">
    <property type="entry name" value="PyrdxlP-dep_Trfase_major"/>
</dbReference>
<dbReference type="InterPro" id="IPR015422">
    <property type="entry name" value="PyrdxlP-dep_Trfase_small"/>
</dbReference>
<dbReference type="InterPro" id="IPR021115">
    <property type="entry name" value="Pyridoxal-P_BS"/>
</dbReference>
<dbReference type="PANTHER" id="PTHR11999">
    <property type="entry name" value="GROUP II PYRIDOXAL-5-PHOSPHATE DECARBOXYLASE"/>
    <property type="match status" value="1"/>
</dbReference>
<dbReference type="PANTHER" id="PTHR11999:SF157">
    <property type="entry name" value="TRYPTOPHAN DECARBOXYLASE 1"/>
    <property type="match status" value="1"/>
</dbReference>
<dbReference type="Pfam" id="PF00282">
    <property type="entry name" value="Pyridoxal_deC"/>
    <property type="match status" value="1"/>
</dbReference>
<dbReference type="PRINTS" id="PR00800">
    <property type="entry name" value="YHDCRBOXLASE"/>
</dbReference>
<dbReference type="SUPFAM" id="SSF53383">
    <property type="entry name" value="PLP-dependent transferases"/>
    <property type="match status" value="1"/>
</dbReference>
<dbReference type="PROSITE" id="PS00392">
    <property type="entry name" value="DDC_GAD_HDC_YDC"/>
    <property type="match status" value="1"/>
</dbReference>
<protein>
    <recommendedName>
        <fullName evidence="4">Tryptophan decarboxylase TDC2</fullName>
        <ecNumber evidence="2">4.1.1.105</ecNumber>
    </recommendedName>
</protein>
<feature type="chain" id="PRO_0000444192" description="Tryptophan decarboxylase TDC2">
    <location>
        <begin position="1"/>
        <end position="498"/>
    </location>
</feature>
<feature type="modified residue" description="N6-(pyridoxal phosphate)lysine" evidence="1">
    <location>
        <position position="316"/>
    </location>
</feature>
<organism>
    <name type="scientific">Camptotheca acuminata</name>
    <name type="common">Happy tree</name>
    <dbReference type="NCBI Taxonomy" id="16922"/>
    <lineage>
        <taxon>Eukaryota</taxon>
        <taxon>Viridiplantae</taxon>
        <taxon>Streptophyta</taxon>
        <taxon>Embryophyta</taxon>
        <taxon>Tracheophyta</taxon>
        <taxon>Spermatophyta</taxon>
        <taxon>Magnoliopsida</taxon>
        <taxon>eudicotyledons</taxon>
        <taxon>Gunneridae</taxon>
        <taxon>Pentapetalae</taxon>
        <taxon>asterids</taxon>
        <taxon>Cornales</taxon>
        <taxon>Nyssaceae</taxon>
        <taxon>Camptotheca</taxon>
    </lineage>
</organism>
<gene>
    <name evidence="3" type="primary">TDC2</name>
</gene>
<reference key="1">
    <citation type="journal article" date="1997" name="Plant J.">
        <title>Tryptophan decarboxylase is encoded by two autonomously regulated genes in Camptotheca acuminata which are differentially expressed during development and stress.</title>
        <authorList>
            <person name="Lopez-Meyer M."/>
            <person name="Nessler C.L."/>
        </authorList>
    </citation>
    <scope>NUCLEOTIDE SEQUENCE [MRNA]</scope>
    <scope>FUNCTION</scope>
    <scope>CATALYTIC ACTIVITY</scope>
    <scope>INDUCTION BY METHYL JASMONATE</scope>
    <source>
        <tissue>Leaf</tissue>
    </source>
</reference>
<evidence type="ECO:0000250" key="1">
    <source>
        <dbReference type="UniProtKB" id="P80041"/>
    </source>
</evidence>
<evidence type="ECO:0000269" key="2">
    <source>
    </source>
</evidence>
<evidence type="ECO:0000303" key="3">
    <source>
    </source>
</evidence>
<evidence type="ECO:0000305" key="4"/>
<proteinExistence type="evidence at protein level"/>
<name>TDC2_CAMAC</name>
<comment type="function">
    <text evidence="2">Involved in the biosynthesis of tryptamine. Supplies tryptamine for the indole moiety of camptothecin (CPT), an anti-cancer monoterpene alkaloid. Represents a key step in monoterpene indole alkaloid biosynthesis. Is specific for tryptophan, and inactive against tyrosine, phenylalanine and 3,4-dihydroxyphenylalanine (dopa).</text>
</comment>
<comment type="catalytic activity">
    <reaction evidence="2">
        <text>L-tryptophan + H(+) = tryptamine + CO2</text>
        <dbReference type="Rhea" id="RHEA:30339"/>
        <dbReference type="ChEBI" id="CHEBI:15378"/>
        <dbReference type="ChEBI" id="CHEBI:16526"/>
        <dbReference type="ChEBI" id="CHEBI:57887"/>
        <dbReference type="ChEBI" id="CHEBI:57912"/>
        <dbReference type="EC" id="4.1.1.105"/>
    </reaction>
</comment>
<comment type="cofactor">
    <cofactor evidence="1">
        <name>pyridoxal 5'-phosphate</name>
        <dbReference type="ChEBI" id="CHEBI:597326"/>
    </cofactor>
</comment>
<comment type="induction">
    <text evidence="2">Induced by methyl jasmonate.</text>
</comment>
<comment type="similarity">
    <text evidence="4">Belongs to the group II decarboxylase family.</text>
</comment>
<accession>P93083</accession>
<sequence length="498" mass="55388">MGSIDSNYDTESAGQCRPLEPEEFRKQAHQMVDFIADYYKNIESYPVLSQVEPGYLQSRLPETAPYRPEPFESILKDVHKDIIPGVTHWLSPNFFAYFPATVSSAAFVGEMLCTCFNAVGFNWLASPAELELEMVVMDWLASMLKLPNSFTFLGTGGGVIQGTTSEAILCTLIAARDRALESIGVDSIHKLVVYGSDQTHSTYAKACNLAGILPCNIRSIRTEAVANFSLSPDSLHREIEADVAAGMVPLYLCATVGTTSTTAIDSLSPLADVANDYGLWFHVDAAYAGSACICPEFRHYLDGIERADSLSLSPHKWLLSYLDCCCLWVKRPSVLVKALSTDPEYLKNKPSESNSVVDFKDWQVGTGRRFKALRLWFVMRSYGVANLQSHIRSDIQMAKMFEEFVNSDPRFEIVVPRVFSLVCFRLNPFSKSDPCNTELLNRKLLEWVNSTGQVYITHTKVGGVYMLRFAVGATLTEEHHVSAAWKLIREGADALLCS</sequence>
<keyword id="KW-0210">Decarboxylase</keyword>
<keyword id="KW-0456">Lyase</keyword>
<keyword id="KW-0663">Pyridoxal phosphate</keyword>